<name>GCSH_BART1</name>
<reference key="1">
    <citation type="journal article" date="2007" name="Nat. Genet.">
        <title>Genomic analysis of Bartonella identifies type IV secretion systems as host adaptability factors.</title>
        <authorList>
            <person name="Saenz H.L."/>
            <person name="Engel P."/>
            <person name="Stoeckli M.C."/>
            <person name="Lanz C."/>
            <person name="Raddatz G."/>
            <person name="Vayssier-Taussat M."/>
            <person name="Birtles R."/>
            <person name="Schuster S.C."/>
            <person name="Dehio C."/>
        </authorList>
    </citation>
    <scope>NUCLEOTIDE SEQUENCE [LARGE SCALE GENOMIC DNA]</scope>
    <source>
        <strain>CIP 105476 / IBS 506</strain>
    </source>
</reference>
<sequence>MSKTYFTQDHEWLSVDGQMVTVGVTHYAQEQLGDLVFVDLPQSGTKLSKGEAAAVVESVKAASDVYSPLDGEVVEINEALTDNPELVNQKAETEGWLWKMTLQDETQLEELLDEDAYKALIG</sequence>
<proteinExistence type="inferred from homology"/>
<feature type="chain" id="PRO_1000078724" description="Glycine cleavage system H protein">
    <location>
        <begin position="1"/>
        <end position="122"/>
    </location>
</feature>
<feature type="domain" description="Lipoyl-binding" evidence="2">
    <location>
        <begin position="19"/>
        <end position="101"/>
    </location>
</feature>
<feature type="modified residue" description="N6-lipoyllysine" evidence="1">
    <location>
        <position position="60"/>
    </location>
</feature>
<organism>
    <name type="scientific">Bartonella tribocorum (strain CIP 105476 / IBS 506)</name>
    <dbReference type="NCBI Taxonomy" id="382640"/>
    <lineage>
        <taxon>Bacteria</taxon>
        <taxon>Pseudomonadati</taxon>
        <taxon>Pseudomonadota</taxon>
        <taxon>Alphaproteobacteria</taxon>
        <taxon>Hyphomicrobiales</taxon>
        <taxon>Bartonellaceae</taxon>
        <taxon>Bartonella</taxon>
    </lineage>
</organism>
<dbReference type="EMBL" id="AM260525">
    <property type="protein sequence ID" value="CAK02048.1"/>
    <property type="molecule type" value="Genomic_DNA"/>
</dbReference>
<dbReference type="RefSeq" id="WP_012232158.1">
    <property type="nucleotide sequence ID" value="NC_010161.1"/>
</dbReference>
<dbReference type="SMR" id="A9IWV1"/>
<dbReference type="KEGG" id="btr:BT_1762"/>
<dbReference type="eggNOG" id="COG0509">
    <property type="taxonomic scope" value="Bacteria"/>
</dbReference>
<dbReference type="HOGENOM" id="CLU_097408_2_0_5"/>
<dbReference type="Proteomes" id="UP000001592">
    <property type="component" value="Chromosome"/>
</dbReference>
<dbReference type="GO" id="GO:0005829">
    <property type="term" value="C:cytosol"/>
    <property type="evidence" value="ECO:0007669"/>
    <property type="project" value="TreeGrafter"/>
</dbReference>
<dbReference type="GO" id="GO:0005960">
    <property type="term" value="C:glycine cleavage complex"/>
    <property type="evidence" value="ECO:0007669"/>
    <property type="project" value="InterPro"/>
</dbReference>
<dbReference type="GO" id="GO:0019464">
    <property type="term" value="P:glycine decarboxylation via glycine cleavage system"/>
    <property type="evidence" value="ECO:0007669"/>
    <property type="project" value="UniProtKB-UniRule"/>
</dbReference>
<dbReference type="CDD" id="cd06848">
    <property type="entry name" value="GCS_H"/>
    <property type="match status" value="1"/>
</dbReference>
<dbReference type="Gene3D" id="2.40.50.100">
    <property type="match status" value="1"/>
</dbReference>
<dbReference type="HAMAP" id="MF_00272">
    <property type="entry name" value="GcvH"/>
    <property type="match status" value="1"/>
</dbReference>
<dbReference type="InterPro" id="IPR003016">
    <property type="entry name" value="2-oxoA_DH_lipoyl-BS"/>
</dbReference>
<dbReference type="InterPro" id="IPR000089">
    <property type="entry name" value="Biotin_lipoyl"/>
</dbReference>
<dbReference type="InterPro" id="IPR002930">
    <property type="entry name" value="GCV_H"/>
</dbReference>
<dbReference type="InterPro" id="IPR033753">
    <property type="entry name" value="GCV_H/Fam206"/>
</dbReference>
<dbReference type="InterPro" id="IPR017453">
    <property type="entry name" value="GCV_H_sub"/>
</dbReference>
<dbReference type="InterPro" id="IPR011053">
    <property type="entry name" value="Single_hybrid_motif"/>
</dbReference>
<dbReference type="NCBIfam" id="TIGR00527">
    <property type="entry name" value="gcvH"/>
    <property type="match status" value="1"/>
</dbReference>
<dbReference type="NCBIfam" id="NF002270">
    <property type="entry name" value="PRK01202.1"/>
    <property type="match status" value="1"/>
</dbReference>
<dbReference type="PANTHER" id="PTHR11715">
    <property type="entry name" value="GLYCINE CLEAVAGE SYSTEM H PROTEIN"/>
    <property type="match status" value="1"/>
</dbReference>
<dbReference type="PANTHER" id="PTHR11715:SF3">
    <property type="entry name" value="GLYCINE CLEAVAGE SYSTEM H PROTEIN-RELATED"/>
    <property type="match status" value="1"/>
</dbReference>
<dbReference type="Pfam" id="PF01597">
    <property type="entry name" value="GCV_H"/>
    <property type="match status" value="1"/>
</dbReference>
<dbReference type="SUPFAM" id="SSF51230">
    <property type="entry name" value="Single hybrid motif"/>
    <property type="match status" value="1"/>
</dbReference>
<dbReference type="PROSITE" id="PS50968">
    <property type="entry name" value="BIOTINYL_LIPOYL"/>
    <property type="match status" value="1"/>
</dbReference>
<dbReference type="PROSITE" id="PS00189">
    <property type="entry name" value="LIPOYL"/>
    <property type="match status" value="1"/>
</dbReference>
<protein>
    <recommendedName>
        <fullName evidence="1">Glycine cleavage system H protein</fullName>
    </recommendedName>
</protein>
<keyword id="KW-0450">Lipoyl</keyword>
<comment type="function">
    <text evidence="1">The glycine cleavage system catalyzes the degradation of glycine. The H protein shuttles the methylamine group of glycine from the P protein to the T protein.</text>
</comment>
<comment type="cofactor">
    <cofactor evidence="1">
        <name>(R)-lipoate</name>
        <dbReference type="ChEBI" id="CHEBI:83088"/>
    </cofactor>
    <text evidence="1">Binds 1 lipoyl cofactor covalently.</text>
</comment>
<comment type="subunit">
    <text evidence="1">The glycine cleavage system is composed of four proteins: P, T, L and H.</text>
</comment>
<comment type="similarity">
    <text evidence="1">Belongs to the GcvH family.</text>
</comment>
<gene>
    <name evidence="1" type="primary">gcvH</name>
    <name type="ordered locus">BT_1762</name>
</gene>
<accession>A9IWV1</accession>
<evidence type="ECO:0000255" key="1">
    <source>
        <dbReference type="HAMAP-Rule" id="MF_00272"/>
    </source>
</evidence>
<evidence type="ECO:0000255" key="2">
    <source>
        <dbReference type="PROSITE-ProRule" id="PRU01066"/>
    </source>
</evidence>